<keyword id="KW-0125">Carotenoid biosynthesis</keyword>
<keyword id="KW-0349">Heme</keyword>
<keyword id="KW-0408">Iron</keyword>
<keyword id="KW-0479">Metal-binding</keyword>
<keyword id="KW-0503">Monooxygenase</keyword>
<keyword id="KW-0560">Oxidoreductase</keyword>
<keyword id="KW-1185">Reference proteome</keyword>
<protein>
    <recommendedName>
        <fullName evidence="4">Spheroidene monooxygenase</fullName>
        <ecNumber evidence="1">1.14.15.9</ecNumber>
    </recommendedName>
</protein>
<sequence>MQTVTLSIFRFNEFEKRLWVLGQMTANKLGMHYLPKAKFWKMFGSGTGQGFTPKPNWHVWSILAVWPDEETARREVAESPIYQRWTKMADESYTVLLQPTSAWGKWDGKEPFEPVKPASDVRPIAALTRATVKFWKAERFWAREPAISHMIGRNKDVVFKIGVGEVPFVQQVTFSIWPDARSMEEFARGAGGPHGEAIKAVRAENWFKEELYARFQILGTIGKWEGKDPVGEALTARPSEAPKPAPAPAAAQPAPAAEAPKPAPAPVAEKPALAVEMPKPAEPPKPVVEAPKPASAPVASKPMPQGGKPNFKGKPGKGGRKENA</sequence>
<reference evidence="8" key="1">
    <citation type="journal article" date="1995" name="J. Bacteriol.">
        <title>Complete DNA sequence, specific Tn5 insertion map, and gene assignment of the carotenoid biosynthesis pathway of Rhodobacter sphaeroides.</title>
        <authorList>
            <person name="Lang H.P."/>
            <person name="Cogdell R.J."/>
            <person name="Takaichi S."/>
            <person name="Hunter C.N."/>
        </authorList>
    </citation>
    <scope>NUCLEOTIDE SEQUENCE [GENOMIC DNA]</scope>
    <source>
        <strain>ATCC 17023 / DSM 158 / JCM 6121 / CCUG 31486 / LMG 2827 / NBRC 12203 / NCIMB 8253 / ATH 2.4.1.</strain>
    </source>
</reference>
<reference evidence="7" key="2">
    <citation type="submission" date="2005-09" db="EMBL/GenBank/DDBJ databases">
        <title>Complete sequence of chromosome 1 of Rhodobacter sphaeroides 2.4.1.</title>
        <authorList>
            <person name="Copeland A."/>
            <person name="Lucas S."/>
            <person name="Lapidus A."/>
            <person name="Barry K."/>
            <person name="Detter J.C."/>
            <person name="Glavina T."/>
            <person name="Hammon N."/>
            <person name="Israni S."/>
            <person name="Pitluck S."/>
            <person name="Richardson P."/>
            <person name="Mackenzie C."/>
            <person name="Choudhary M."/>
            <person name="Larimer F."/>
            <person name="Hauser L.J."/>
            <person name="Land M."/>
            <person name="Donohue T.J."/>
            <person name="Kaplan S."/>
        </authorList>
    </citation>
    <scope>NUCLEOTIDE SEQUENCE [LARGE SCALE GENOMIC DNA]</scope>
    <source>
        <strain>ATCC 17023 / DSM 158 / JCM 6121 / CCUG 31486 / LMG 2827 / NBRC 12203 / NCIMB 8253 / ATH 2.4.1.</strain>
    </source>
</reference>
<reference key="3">
    <citation type="journal article" date="2010" name="Appl. Environ. Microbiol.">
        <title>Novel activity of Rhodobacter sphaeroides spheroidene monooxygenase CrtA expressed in Escherichia coli.</title>
        <authorList>
            <person name="Lee P.C."/>
            <person name="Holtzapple E."/>
            <person name="Schmidt-Dannert C."/>
        </authorList>
    </citation>
    <scope>FUNCTION</scope>
    <scope>COFACTOR</scope>
    <scope>SUBSTRATE SPECIFICITY</scope>
    <scope>BIOTECHNOLOGY</scope>
</reference>
<proteinExistence type="evidence at protein level"/>
<accession>Q3J189</accession>
<accession>Q54790</accession>
<name>CRTA_CERS4</name>
<organism>
    <name type="scientific">Cereibacter sphaeroides (strain ATCC 17023 / DSM 158 / JCM 6121 / CCUG 31486 / LMG 2827 / NBRC 12203 / NCIMB 8253 / ATH 2.4.1.)</name>
    <name type="common">Rhodobacter sphaeroides</name>
    <dbReference type="NCBI Taxonomy" id="272943"/>
    <lineage>
        <taxon>Bacteria</taxon>
        <taxon>Pseudomonadati</taxon>
        <taxon>Pseudomonadota</taxon>
        <taxon>Alphaproteobacteria</taxon>
        <taxon>Rhodobacterales</taxon>
        <taxon>Paracoccaceae</taxon>
        <taxon>Cereibacter</taxon>
    </lineage>
</organism>
<gene>
    <name evidence="5" type="primary">crtA</name>
    <name evidence="6" type="ordered locus">RHOS4_18770</name>
    <name evidence="7" type="ORF">RSP_0272</name>
</gene>
<dbReference type="EC" id="1.14.15.9" evidence="1"/>
<dbReference type="EMBL" id="AJ010302">
    <property type="protein sequence ID" value="CAB38738.1"/>
    <property type="molecule type" value="Genomic_DNA"/>
</dbReference>
<dbReference type="EMBL" id="CP000143">
    <property type="protein sequence ID" value="ABA79445.1"/>
    <property type="molecule type" value="Genomic_DNA"/>
</dbReference>
<dbReference type="PIR" id="S49619">
    <property type="entry name" value="S49619"/>
</dbReference>
<dbReference type="RefSeq" id="WP_002720436.1">
    <property type="nucleotide sequence ID" value="NZ_CP030271.1"/>
</dbReference>
<dbReference type="RefSeq" id="YP_353346.1">
    <property type="nucleotide sequence ID" value="NC_007493.2"/>
</dbReference>
<dbReference type="STRING" id="272943.RSP_0272"/>
<dbReference type="EnsemblBacteria" id="ABA79445">
    <property type="protein sequence ID" value="ABA79445"/>
    <property type="gene ID" value="RSP_0272"/>
</dbReference>
<dbReference type="GeneID" id="3719281"/>
<dbReference type="KEGG" id="rsp:RSP_0272"/>
<dbReference type="PATRIC" id="fig|272943.9.peg.2215"/>
<dbReference type="eggNOG" id="ENOG5030G1W">
    <property type="taxonomic scope" value="Bacteria"/>
</dbReference>
<dbReference type="OrthoDB" id="1122317at2"/>
<dbReference type="UniPathway" id="UPA00683"/>
<dbReference type="Proteomes" id="UP000002703">
    <property type="component" value="Chromosome 1"/>
</dbReference>
<dbReference type="GO" id="GO:0046872">
    <property type="term" value="F:metal ion binding"/>
    <property type="evidence" value="ECO:0007669"/>
    <property type="project" value="UniProtKB-KW"/>
</dbReference>
<dbReference type="GO" id="GO:0043823">
    <property type="term" value="F:spheroidene monooxygenase activity"/>
    <property type="evidence" value="ECO:0007669"/>
    <property type="project" value="RHEA"/>
</dbReference>
<dbReference type="GO" id="GO:0016117">
    <property type="term" value="P:carotenoid biosynthetic process"/>
    <property type="evidence" value="ECO:0007669"/>
    <property type="project" value="UniProtKB-KW"/>
</dbReference>
<dbReference type="CDD" id="cd21650">
    <property type="entry name" value="CrtA-like"/>
    <property type="match status" value="1"/>
</dbReference>
<dbReference type="InterPro" id="IPR049574">
    <property type="entry name" value="CrtA-like"/>
</dbReference>
<dbReference type="NCBIfam" id="NF045923">
    <property type="entry name" value="SpheroidMoxCrtARhod"/>
    <property type="match status" value="1"/>
</dbReference>
<comment type="function">
    <text evidence="1 3">Involved in the biosynthesis of the carotenoid spheroidene (By similarity). Catalyzes the introduction of one keto group at the C-2 position of spheroidene (By similarity). In vitro, can use nonnative substrates and produce oxocarotenoids with a hydroxy and/or a keto group, derived from neurosporene, lycopene, 3,4-didehydrolycopene or 3,4,3',4'-tetradehydrolycopene (PubMed:20851979).</text>
</comment>
<comment type="catalytic activity">
    <reaction evidence="1">
        <text>spheroidene + 4 reduced [2Fe-2S]-[ferredoxin] + 2 O2 + 4 H(+) = spheroiden-2-one + 4 oxidized [2Fe-2S]-[ferredoxin] + 3 H2O</text>
        <dbReference type="Rhea" id="RHEA:33027"/>
        <dbReference type="Rhea" id="RHEA-COMP:10000"/>
        <dbReference type="Rhea" id="RHEA-COMP:10001"/>
        <dbReference type="ChEBI" id="CHEBI:15377"/>
        <dbReference type="ChEBI" id="CHEBI:15378"/>
        <dbReference type="ChEBI" id="CHEBI:15379"/>
        <dbReference type="ChEBI" id="CHEBI:33737"/>
        <dbReference type="ChEBI" id="CHEBI:33738"/>
        <dbReference type="ChEBI" id="CHEBI:35330"/>
        <dbReference type="ChEBI" id="CHEBI:62480"/>
        <dbReference type="EC" id="1.14.15.9"/>
    </reaction>
    <physiologicalReaction direction="left-to-right" evidence="1">
        <dbReference type="Rhea" id="RHEA:33028"/>
    </physiologicalReaction>
</comment>
<comment type="catalytic activity">
    <reaction evidence="1">
        <text>spheroidene + 2 reduced [2Fe-2S]-[ferredoxin] + O2 + 2 H(+) = 2-hydroxyspheroidene + 2 oxidized [2Fe-2S]-[ferredoxin] + H2O</text>
        <dbReference type="Rhea" id="RHEA:49328"/>
        <dbReference type="Rhea" id="RHEA-COMP:10000"/>
        <dbReference type="Rhea" id="RHEA-COMP:10001"/>
        <dbReference type="ChEBI" id="CHEBI:15377"/>
        <dbReference type="ChEBI" id="CHEBI:15378"/>
        <dbReference type="ChEBI" id="CHEBI:15379"/>
        <dbReference type="ChEBI" id="CHEBI:33737"/>
        <dbReference type="ChEBI" id="CHEBI:33738"/>
        <dbReference type="ChEBI" id="CHEBI:35330"/>
        <dbReference type="ChEBI" id="CHEBI:91221"/>
    </reaction>
    <physiologicalReaction direction="left-to-right" evidence="1">
        <dbReference type="Rhea" id="RHEA:49329"/>
    </physiologicalReaction>
</comment>
<comment type="catalytic activity">
    <reaction evidence="1">
        <text>2-hydroxyspheroidene + 2 reduced [2Fe-2S]-[ferredoxin] + O2 + 2 H(+) = 2,2-dihydroxyspheroidene + 2 oxidized [2Fe-2S]-[ferredoxin] + H2O</text>
        <dbReference type="Rhea" id="RHEA:49332"/>
        <dbReference type="Rhea" id="RHEA-COMP:10000"/>
        <dbReference type="Rhea" id="RHEA-COMP:10001"/>
        <dbReference type="ChEBI" id="CHEBI:15377"/>
        <dbReference type="ChEBI" id="CHEBI:15378"/>
        <dbReference type="ChEBI" id="CHEBI:15379"/>
        <dbReference type="ChEBI" id="CHEBI:33737"/>
        <dbReference type="ChEBI" id="CHEBI:33738"/>
        <dbReference type="ChEBI" id="CHEBI:91221"/>
        <dbReference type="ChEBI" id="CHEBI:91223"/>
    </reaction>
    <physiologicalReaction direction="left-to-right" evidence="1">
        <dbReference type="Rhea" id="RHEA:49333"/>
    </physiologicalReaction>
</comment>
<comment type="catalytic activity">
    <reaction evidence="1">
        <text>2,2-dihydroxyspheroidene = spheroiden-2-one + H2O</text>
        <dbReference type="Rhea" id="RHEA:49336"/>
        <dbReference type="ChEBI" id="CHEBI:15377"/>
        <dbReference type="ChEBI" id="CHEBI:62480"/>
        <dbReference type="ChEBI" id="CHEBI:91223"/>
    </reaction>
    <physiologicalReaction direction="left-to-right" evidence="1">
        <dbReference type="Rhea" id="RHEA:49337"/>
    </physiologicalReaction>
</comment>
<comment type="cofactor">
    <cofactor evidence="3">
        <name>heme</name>
        <dbReference type="ChEBI" id="CHEBI:30413"/>
    </cofactor>
    <text evidence="3">Binds 1 heme per subunit.</text>
</comment>
<comment type="pathway">
    <text evidence="1">Carotenoid biosynthesis; spheroidene biosynthesis.</text>
</comment>
<comment type="biotechnology">
    <text evidence="3">Could be biotechnologically utilized to produce more diverse oxo chemical structures.</text>
</comment>
<comment type="similarity">
    <text evidence="6">Belongs to the CrtA family.</text>
</comment>
<feature type="chain" id="PRO_0000461797" description="Spheroidene monooxygenase">
    <location>
        <begin position="1"/>
        <end position="324"/>
    </location>
</feature>
<feature type="region of interest" description="Disordered" evidence="2">
    <location>
        <begin position="226"/>
        <end position="324"/>
    </location>
</feature>
<feature type="compositionally biased region" description="Low complexity" evidence="2">
    <location>
        <begin position="248"/>
        <end position="278"/>
    </location>
</feature>
<feature type="compositionally biased region" description="Low complexity" evidence="2">
    <location>
        <begin position="287"/>
        <end position="313"/>
    </location>
</feature>
<feature type="sequence conflict" description="In Ref. 1; CAB38738." evidence="6" ref="1">
    <original>V</original>
    <variation>A</variation>
    <location>
        <position position="121"/>
    </location>
</feature>
<feature type="sequence conflict" description="In Ref. 1; CAB38738." evidence="6" ref="1">
    <original>AREP</original>
    <variation>GARA</variation>
    <location>
        <begin position="142"/>
        <end position="145"/>
    </location>
</feature>
<feature type="sequence conflict" description="In Ref. 1; CAB38738." evidence="6" ref="1">
    <original>DARSMEEFA</original>
    <variation>EYAARWRSSP</variation>
    <location>
        <begin position="179"/>
        <end position="187"/>
    </location>
</feature>
<feature type="sequence conflict" description="In Ref. 1; CAB38738." evidence="6" ref="1">
    <original>ASAPVASKPMPQGGKPNFKGKPGKGGRKENA</original>
    <variation>FRSRGLEADAAGREAELQGQARQGRPQRERLTQ</variation>
    <location>
        <begin position="294"/>
        <end position="324"/>
    </location>
</feature>
<evidence type="ECO:0000250" key="1">
    <source>
        <dbReference type="UniProtKB" id="P17055"/>
    </source>
</evidence>
<evidence type="ECO:0000256" key="2">
    <source>
        <dbReference type="SAM" id="MobiDB-lite"/>
    </source>
</evidence>
<evidence type="ECO:0000269" key="3">
    <source>
    </source>
</evidence>
<evidence type="ECO:0000303" key="4">
    <source>
    </source>
</evidence>
<evidence type="ECO:0000303" key="5">
    <source>
    </source>
</evidence>
<evidence type="ECO:0000305" key="6"/>
<evidence type="ECO:0000312" key="7">
    <source>
        <dbReference type="EMBL" id="ABA79445.1"/>
    </source>
</evidence>
<evidence type="ECO:0000312" key="8">
    <source>
        <dbReference type="EMBL" id="CAB38738.1"/>
    </source>
</evidence>